<evidence type="ECO:0000255" key="1">
    <source>
        <dbReference type="HAMAP-Rule" id="MF_00182"/>
    </source>
</evidence>
<dbReference type="EC" id="2.1.2.9" evidence="1"/>
<dbReference type="EMBL" id="AE008691">
    <property type="protein sequence ID" value="AAM24724.1"/>
    <property type="molecule type" value="Genomic_DNA"/>
</dbReference>
<dbReference type="RefSeq" id="WP_011025763.1">
    <property type="nucleotide sequence ID" value="NC_003869.1"/>
</dbReference>
<dbReference type="SMR" id="Q8R9T1"/>
<dbReference type="STRING" id="273068.TTE1506"/>
<dbReference type="KEGG" id="tte:TTE1506"/>
<dbReference type="eggNOG" id="COG0223">
    <property type="taxonomic scope" value="Bacteria"/>
</dbReference>
<dbReference type="HOGENOM" id="CLU_033347_1_1_9"/>
<dbReference type="OrthoDB" id="9802815at2"/>
<dbReference type="Proteomes" id="UP000000555">
    <property type="component" value="Chromosome"/>
</dbReference>
<dbReference type="GO" id="GO:0005829">
    <property type="term" value="C:cytosol"/>
    <property type="evidence" value="ECO:0007669"/>
    <property type="project" value="TreeGrafter"/>
</dbReference>
<dbReference type="GO" id="GO:0004479">
    <property type="term" value="F:methionyl-tRNA formyltransferase activity"/>
    <property type="evidence" value="ECO:0007669"/>
    <property type="project" value="UniProtKB-UniRule"/>
</dbReference>
<dbReference type="CDD" id="cd08646">
    <property type="entry name" value="FMT_core_Met-tRNA-FMT_N"/>
    <property type="match status" value="1"/>
</dbReference>
<dbReference type="CDD" id="cd08704">
    <property type="entry name" value="Met_tRNA_FMT_C"/>
    <property type="match status" value="1"/>
</dbReference>
<dbReference type="FunFam" id="3.40.50.12230:FF:000001">
    <property type="entry name" value="Methionyl-tRNA formyltransferase"/>
    <property type="match status" value="1"/>
</dbReference>
<dbReference type="Gene3D" id="3.40.50.12230">
    <property type="match status" value="1"/>
</dbReference>
<dbReference type="HAMAP" id="MF_00182">
    <property type="entry name" value="Formyl_trans"/>
    <property type="match status" value="1"/>
</dbReference>
<dbReference type="InterPro" id="IPR005794">
    <property type="entry name" value="Fmt"/>
</dbReference>
<dbReference type="InterPro" id="IPR005793">
    <property type="entry name" value="Formyl_trans_C"/>
</dbReference>
<dbReference type="InterPro" id="IPR002376">
    <property type="entry name" value="Formyl_transf_N"/>
</dbReference>
<dbReference type="InterPro" id="IPR036477">
    <property type="entry name" value="Formyl_transf_N_sf"/>
</dbReference>
<dbReference type="InterPro" id="IPR011034">
    <property type="entry name" value="Formyl_transferase-like_C_sf"/>
</dbReference>
<dbReference type="InterPro" id="IPR001555">
    <property type="entry name" value="GART_AS"/>
</dbReference>
<dbReference type="InterPro" id="IPR044135">
    <property type="entry name" value="Met-tRNA-FMT_C"/>
</dbReference>
<dbReference type="InterPro" id="IPR041711">
    <property type="entry name" value="Met-tRNA-FMT_N"/>
</dbReference>
<dbReference type="NCBIfam" id="TIGR00460">
    <property type="entry name" value="fmt"/>
    <property type="match status" value="1"/>
</dbReference>
<dbReference type="PANTHER" id="PTHR11138">
    <property type="entry name" value="METHIONYL-TRNA FORMYLTRANSFERASE"/>
    <property type="match status" value="1"/>
</dbReference>
<dbReference type="PANTHER" id="PTHR11138:SF5">
    <property type="entry name" value="METHIONYL-TRNA FORMYLTRANSFERASE, MITOCHONDRIAL"/>
    <property type="match status" value="1"/>
</dbReference>
<dbReference type="Pfam" id="PF02911">
    <property type="entry name" value="Formyl_trans_C"/>
    <property type="match status" value="1"/>
</dbReference>
<dbReference type="Pfam" id="PF00551">
    <property type="entry name" value="Formyl_trans_N"/>
    <property type="match status" value="1"/>
</dbReference>
<dbReference type="SUPFAM" id="SSF50486">
    <property type="entry name" value="FMT C-terminal domain-like"/>
    <property type="match status" value="1"/>
</dbReference>
<dbReference type="SUPFAM" id="SSF53328">
    <property type="entry name" value="Formyltransferase"/>
    <property type="match status" value="1"/>
</dbReference>
<dbReference type="PROSITE" id="PS00373">
    <property type="entry name" value="GART"/>
    <property type="match status" value="1"/>
</dbReference>
<accession>Q8R9T1</accession>
<name>FMT_CALS4</name>
<comment type="function">
    <text evidence="1">Attaches a formyl group to the free amino group of methionyl-tRNA(fMet). The formyl group appears to play a dual role in the initiator identity of N-formylmethionyl-tRNA by promoting its recognition by IF2 and preventing the misappropriation of this tRNA by the elongation apparatus.</text>
</comment>
<comment type="catalytic activity">
    <reaction evidence="1">
        <text>L-methionyl-tRNA(fMet) + (6R)-10-formyltetrahydrofolate = N-formyl-L-methionyl-tRNA(fMet) + (6S)-5,6,7,8-tetrahydrofolate + H(+)</text>
        <dbReference type="Rhea" id="RHEA:24380"/>
        <dbReference type="Rhea" id="RHEA-COMP:9952"/>
        <dbReference type="Rhea" id="RHEA-COMP:9953"/>
        <dbReference type="ChEBI" id="CHEBI:15378"/>
        <dbReference type="ChEBI" id="CHEBI:57453"/>
        <dbReference type="ChEBI" id="CHEBI:78530"/>
        <dbReference type="ChEBI" id="CHEBI:78844"/>
        <dbReference type="ChEBI" id="CHEBI:195366"/>
        <dbReference type="EC" id="2.1.2.9"/>
    </reaction>
</comment>
<comment type="similarity">
    <text evidence="1">Belongs to the Fmt family.</text>
</comment>
<gene>
    <name evidence="1" type="primary">fmt</name>
    <name type="ordered locus">TTE1506</name>
</gene>
<feature type="chain" id="PRO_0000083075" description="Methionyl-tRNA formyltransferase">
    <location>
        <begin position="1"/>
        <end position="309"/>
    </location>
</feature>
<feature type="binding site" evidence="1">
    <location>
        <begin position="110"/>
        <end position="113"/>
    </location>
    <ligand>
        <name>(6S)-5,6,7,8-tetrahydrofolate</name>
        <dbReference type="ChEBI" id="CHEBI:57453"/>
    </ligand>
</feature>
<protein>
    <recommendedName>
        <fullName evidence="1">Methionyl-tRNA formyltransferase</fullName>
        <ecNumber evidence="1">2.1.2.9</ecNumber>
    </recommendedName>
</protein>
<keyword id="KW-0648">Protein biosynthesis</keyword>
<keyword id="KW-1185">Reference proteome</keyword>
<keyword id="KW-0808">Transferase</keyword>
<reference key="1">
    <citation type="journal article" date="2002" name="Genome Res.">
        <title>A complete sequence of the T. tengcongensis genome.</title>
        <authorList>
            <person name="Bao Q."/>
            <person name="Tian Y."/>
            <person name="Li W."/>
            <person name="Xu Z."/>
            <person name="Xuan Z."/>
            <person name="Hu S."/>
            <person name="Dong W."/>
            <person name="Yang J."/>
            <person name="Chen Y."/>
            <person name="Xue Y."/>
            <person name="Xu Y."/>
            <person name="Lai X."/>
            <person name="Huang L."/>
            <person name="Dong X."/>
            <person name="Ma Y."/>
            <person name="Ling L."/>
            <person name="Tan H."/>
            <person name="Chen R."/>
            <person name="Wang J."/>
            <person name="Yu J."/>
            <person name="Yang H."/>
        </authorList>
    </citation>
    <scope>NUCLEOTIDE SEQUENCE [LARGE SCALE GENOMIC DNA]</scope>
    <source>
        <strain>DSM 15242 / JCM 11007 / NBRC 100824 / MB4</strain>
    </source>
</reference>
<organism>
    <name type="scientific">Caldanaerobacter subterraneus subsp. tengcongensis (strain DSM 15242 / JCM 11007 / NBRC 100824 / MB4)</name>
    <name type="common">Thermoanaerobacter tengcongensis</name>
    <dbReference type="NCBI Taxonomy" id="273068"/>
    <lineage>
        <taxon>Bacteria</taxon>
        <taxon>Bacillati</taxon>
        <taxon>Bacillota</taxon>
        <taxon>Clostridia</taxon>
        <taxon>Thermoanaerobacterales</taxon>
        <taxon>Thermoanaerobacteraceae</taxon>
        <taxon>Caldanaerobacter</taxon>
    </lineage>
</organism>
<proteinExistence type="inferred from homology"/>
<sequence>MRIVFMGTPEFAVPSLKRLFEEGYDVLAVVTQPDKQRGRGMKVSFSPVKELALQKGVKVLQPESVKNNPEFLQELKELNPEVIVVAAYGKILPEEILTLPEYGCINVHASLLPKYRGAAPINWAIINGEKETGITTMLMDKGLDTGDMLLKRSIAIEEDDDAQTLHDKLANLGAEVLSETLKKLKEGKLIPEKQKDEEATYAPIITKEMGHIDWKSPACRIRNLIRGLKPWPGCYTFYDGKMLKIWKAEVVEHFGNEPPGSVLKSKDELIVKCGENALRILEIQQEGSRKMGIREYLIGHNIPEGTILK</sequence>